<dbReference type="EC" id="3.4.23.2" evidence="1"/>
<dbReference type="PIR" id="S68032">
    <property type="entry name" value="S68032"/>
</dbReference>
<dbReference type="STRING" id="9823.ENSSSCP00000007245"/>
<dbReference type="PaxDb" id="9823-ENSSSCP00000007245"/>
<dbReference type="eggNOG" id="KOG1339">
    <property type="taxonomic scope" value="Eukaryota"/>
</dbReference>
<dbReference type="HOGENOM" id="CLU_013253_3_0_1"/>
<dbReference type="InParanoid" id="Q10735"/>
<dbReference type="Proteomes" id="UP000008227">
    <property type="component" value="Unplaced"/>
</dbReference>
<dbReference type="Proteomes" id="UP000314985">
    <property type="component" value="Unplaced"/>
</dbReference>
<dbReference type="Proteomes" id="UP000694570">
    <property type="component" value="Unplaced"/>
</dbReference>
<dbReference type="Proteomes" id="UP000694571">
    <property type="component" value="Unplaced"/>
</dbReference>
<dbReference type="Proteomes" id="UP000694720">
    <property type="component" value="Unplaced"/>
</dbReference>
<dbReference type="Proteomes" id="UP000694722">
    <property type="component" value="Unplaced"/>
</dbReference>
<dbReference type="Proteomes" id="UP000694723">
    <property type="component" value="Unplaced"/>
</dbReference>
<dbReference type="Proteomes" id="UP000694724">
    <property type="component" value="Unplaced"/>
</dbReference>
<dbReference type="Proteomes" id="UP000694725">
    <property type="component" value="Unplaced"/>
</dbReference>
<dbReference type="Proteomes" id="UP000694726">
    <property type="component" value="Unplaced"/>
</dbReference>
<dbReference type="Proteomes" id="UP000694727">
    <property type="component" value="Unplaced"/>
</dbReference>
<dbReference type="Proteomes" id="UP000694728">
    <property type="component" value="Unplaced"/>
</dbReference>
<dbReference type="GO" id="GO:0005576">
    <property type="term" value="C:extracellular region"/>
    <property type="evidence" value="ECO:0007669"/>
    <property type="project" value="UniProtKB-SubCell"/>
</dbReference>
<dbReference type="GO" id="GO:0004190">
    <property type="term" value="F:aspartic-type endopeptidase activity"/>
    <property type="evidence" value="ECO:0007669"/>
    <property type="project" value="UniProtKB-KW"/>
</dbReference>
<dbReference type="GO" id="GO:0007586">
    <property type="term" value="P:digestion"/>
    <property type="evidence" value="ECO:0007669"/>
    <property type="project" value="UniProtKB-KW"/>
</dbReference>
<dbReference type="GO" id="GO:0006508">
    <property type="term" value="P:proteolysis"/>
    <property type="evidence" value="ECO:0007669"/>
    <property type="project" value="UniProtKB-KW"/>
</dbReference>
<dbReference type="Gene3D" id="6.10.140.60">
    <property type="match status" value="1"/>
</dbReference>
<dbReference type="InterPro" id="IPR012848">
    <property type="entry name" value="Aspartic_peptidase_N"/>
</dbReference>
<dbReference type="InterPro" id="IPR021109">
    <property type="entry name" value="Peptidase_aspartic_dom_sf"/>
</dbReference>
<dbReference type="Pfam" id="PF07966">
    <property type="entry name" value="A1_Propeptide"/>
    <property type="match status" value="1"/>
</dbReference>
<dbReference type="SUPFAM" id="SSF50630">
    <property type="entry name" value="Acid proteases"/>
    <property type="match status" value="1"/>
</dbReference>
<proteinExistence type="evidence at protein level"/>
<organism>
    <name type="scientific">Sus scrofa</name>
    <name type="common">Pig</name>
    <dbReference type="NCBI Taxonomy" id="9823"/>
    <lineage>
        <taxon>Eukaryota</taxon>
        <taxon>Metazoa</taxon>
        <taxon>Chordata</taxon>
        <taxon>Craniata</taxon>
        <taxon>Vertebrata</taxon>
        <taxon>Euteleostomi</taxon>
        <taxon>Mammalia</taxon>
        <taxon>Eutheria</taxon>
        <taxon>Laurasiatheria</taxon>
        <taxon>Artiodactyla</taxon>
        <taxon>Suina</taxon>
        <taxon>Suidae</taxon>
        <taxon>Sus</taxon>
    </lineage>
</organism>
<feature type="propeptide" id="PRO_0000026050" description="Activation peptide">
    <location>
        <begin position="1"/>
        <end position="43"/>
    </location>
</feature>
<feature type="chain" id="PRO_0000026051" description="Pepsin B">
    <location>
        <begin position="44"/>
        <end position="67" status="greater than"/>
    </location>
</feature>
<feature type="non-terminal residue">
    <location>
        <position position="67"/>
    </location>
</feature>
<gene>
    <name type="primary">PGB</name>
</gene>
<accession>Q10735</accession>
<sequence length="67" mass="7799">MERIILRKGKSIREAMEEQGVLEKFLKNRPKIDPAAKYHFNNDAVAYEPFTNYLDSFYFGEISIGTP</sequence>
<protein>
    <recommendedName>
        <fullName>Pepsin B</fullName>
        <ecNumber evidence="1">3.4.23.2</ecNumber>
    </recommendedName>
    <alternativeName>
        <fullName>Parapepsin I</fullName>
    </alternativeName>
</protein>
<name>PEPB_PIG</name>
<comment type="catalytic activity">
    <reaction evidence="1">
        <text>Degradation of gelatin, little activity on hemoglobin. Specificity on B chain of insulin more restricted than that of pepsin A. Does not cleave 1-Phe-|-Val-2, 4-Gln-|-His-5 or 23-Gly-|-Phe-24.</text>
        <dbReference type="EC" id="3.4.23.2"/>
    </reaction>
</comment>
<comment type="subcellular location">
    <subcellularLocation>
        <location>Secreted</location>
    </subcellularLocation>
</comment>
<comment type="similarity">
    <text evidence="2">Belongs to the peptidase A1 family.</text>
</comment>
<reference key="1">
    <citation type="journal article" date="1995" name="Arch. Biochem. Biophys.">
        <title>Purification and characterization of porcine pepsinogen B and pepsin B.</title>
        <authorList>
            <person name="Nielsen P.K."/>
            <person name="Foltmann B."/>
        </authorList>
    </citation>
    <scope>PROTEIN SEQUENCE</scope>
    <scope>CATALYTIC ACTIVITY</scope>
    <scope>CHARACTERIZATION</scope>
    <source>
        <tissue>Gastric mucosa</tissue>
    </source>
</reference>
<keyword id="KW-0064">Aspartyl protease</keyword>
<keyword id="KW-0222">Digestion</keyword>
<keyword id="KW-0903">Direct protein sequencing</keyword>
<keyword id="KW-0378">Hydrolase</keyword>
<keyword id="KW-0645">Protease</keyword>
<keyword id="KW-1185">Reference proteome</keyword>
<keyword id="KW-0964">Secreted</keyword>
<keyword id="KW-0865">Zymogen</keyword>
<evidence type="ECO:0000269" key="1">
    <source>
    </source>
</evidence>
<evidence type="ECO:0000305" key="2"/>